<feature type="chain" id="PRO_0000438691" description="Rootletin" evidence="10">
    <location>
        <begin position="1"/>
        <end position="1955"/>
    </location>
</feature>
<feature type="region of interest" description="Disordered" evidence="3">
    <location>
        <begin position="321"/>
        <end position="341"/>
    </location>
</feature>
<feature type="region of interest" description="Disordered" evidence="3">
    <location>
        <begin position="391"/>
        <end position="451"/>
    </location>
</feature>
<feature type="region of interest" description="Disordered" evidence="3">
    <location>
        <begin position="504"/>
        <end position="551"/>
    </location>
</feature>
<feature type="region of interest" description="Disordered" evidence="3">
    <location>
        <begin position="907"/>
        <end position="935"/>
    </location>
</feature>
<feature type="region of interest" description="Disordered" evidence="3">
    <location>
        <begin position="961"/>
        <end position="998"/>
    </location>
</feature>
<feature type="coiled-coil region" evidence="2">
    <location>
        <begin position="29"/>
        <end position="58"/>
    </location>
</feature>
<feature type="coiled-coil region" evidence="2">
    <location>
        <begin position="162"/>
        <end position="223"/>
    </location>
</feature>
<feature type="coiled-coil region" evidence="2">
    <location>
        <begin position="284"/>
        <end position="1303"/>
    </location>
</feature>
<feature type="coiled-coil region" evidence="2">
    <location>
        <begin position="1368"/>
        <end position="1579"/>
    </location>
</feature>
<feature type="coiled-coil region" evidence="2">
    <location>
        <begin position="1607"/>
        <end position="1863"/>
    </location>
</feature>
<feature type="compositionally biased region" description="Basic and acidic residues" evidence="3">
    <location>
        <begin position="326"/>
        <end position="341"/>
    </location>
</feature>
<feature type="compositionally biased region" description="Basic and acidic residues" evidence="3">
    <location>
        <begin position="396"/>
        <end position="451"/>
    </location>
</feature>
<feature type="compositionally biased region" description="Basic and acidic residues" evidence="3">
    <location>
        <begin position="907"/>
        <end position="931"/>
    </location>
</feature>
<feature type="compositionally biased region" description="Basic and acidic residues" evidence="3">
    <location>
        <begin position="961"/>
        <end position="982"/>
    </location>
</feature>
<feature type="compositionally biased region" description="Basic and acidic residues" evidence="3">
    <location>
        <begin position="989"/>
        <end position="998"/>
    </location>
</feature>
<feature type="splice variant" id="VSP_058713" description="In isoform d." evidence="10">
    <location>
        <begin position="1"/>
        <end position="380"/>
    </location>
</feature>
<feature type="splice variant" id="VSP_058714" description="In isoform a." evidence="10">
    <original>H</original>
    <variation>V</variation>
    <location>
        <position position="1884"/>
    </location>
</feature>
<feature type="splice variant" id="VSP_058715" description="In isoform a." evidence="10">
    <location>
        <begin position="1885"/>
        <end position="1955"/>
    </location>
</feature>
<feature type="splice variant" id="VSP_058716" description="In isoform c." evidence="10">
    <original>DGREA</original>
    <variation>GTLIM</variation>
    <location>
        <begin position="1938"/>
        <end position="1942"/>
    </location>
</feature>
<feature type="splice variant" id="VSP_058717" description="In isoform c." evidence="10">
    <location>
        <begin position="1943"/>
        <end position="1955"/>
    </location>
</feature>
<gene>
    <name evidence="9 14" type="primary">che-10</name>
    <name evidence="8 14" type="synonym">dyf-14</name>
    <name evidence="14" type="ORF">F35D11.11</name>
</gene>
<evidence type="ECO:0000250" key="1">
    <source>
        <dbReference type="UniProtKB" id="Q5TZA2"/>
    </source>
</evidence>
<evidence type="ECO:0000255" key="2"/>
<evidence type="ECO:0000256" key="3">
    <source>
        <dbReference type="SAM" id="MobiDB-lite"/>
    </source>
</evidence>
<evidence type="ECO:0000269" key="4">
    <source>
    </source>
</evidence>
<evidence type="ECO:0000269" key="5">
    <source>
    </source>
</evidence>
<evidence type="ECO:0000269" key="6">
    <source>
    </source>
</evidence>
<evidence type="ECO:0000269" key="7">
    <source>
    </source>
</evidence>
<evidence type="ECO:0000303" key="8">
    <source>
    </source>
</evidence>
<evidence type="ECO:0000303" key="9">
    <source>
    </source>
</evidence>
<evidence type="ECO:0000305" key="10"/>
<evidence type="ECO:0000305" key="11">
    <source>
    </source>
</evidence>
<evidence type="ECO:0000312" key="12">
    <source>
        <dbReference type="Proteomes" id="UP000001940"/>
    </source>
</evidence>
<evidence type="ECO:0000312" key="13">
    <source>
        <dbReference type="WormBase" id="F35D11.11a"/>
    </source>
</evidence>
<evidence type="ECO:0000312" key="14">
    <source>
        <dbReference type="WormBase" id="F35D11.11b"/>
    </source>
</evidence>
<evidence type="ECO:0000312" key="15">
    <source>
        <dbReference type="WormBase" id="F35D11.11c"/>
    </source>
</evidence>
<evidence type="ECO:0000312" key="16">
    <source>
        <dbReference type="WormBase" id="F35D11.11d"/>
    </source>
</evidence>
<dbReference type="EMBL" id="BX284602">
    <property type="protein sequence ID" value="CCD70538.1"/>
    <property type="molecule type" value="Genomic_DNA"/>
</dbReference>
<dbReference type="EMBL" id="BX284602">
    <property type="protein sequence ID" value="CCD70539.1"/>
    <property type="molecule type" value="Genomic_DNA"/>
</dbReference>
<dbReference type="EMBL" id="BX284602">
    <property type="protein sequence ID" value="CCD70540.1"/>
    <property type="molecule type" value="Genomic_DNA"/>
</dbReference>
<dbReference type="EMBL" id="BX284602">
    <property type="protein sequence ID" value="CCD70541.1"/>
    <property type="molecule type" value="Genomic_DNA"/>
</dbReference>
<dbReference type="RefSeq" id="NP_001367815.1">
    <molecule id="Q09EF7-4"/>
    <property type="nucleotide sequence ID" value="NM_001381398.2"/>
</dbReference>
<dbReference type="RefSeq" id="NP_494819.3">
    <molecule id="Q09EF7-1"/>
    <property type="nucleotide sequence ID" value="NM_062418.8"/>
</dbReference>
<dbReference type="RefSeq" id="NP_494820.3">
    <molecule id="Q09EF7-3"/>
    <property type="nucleotide sequence ID" value="NM_062419.7"/>
</dbReference>
<dbReference type="RefSeq" id="NP_494821.3">
    <molecule id="Q09EF7-2"/>
    <property type="nucleotide sequence ID" value="NM_062420.7"/>
</dbReference>
<dbReference type="RefSeq" id="NP_872028.2">
    <property type="nucleotide sequence ID" value="NM_182228.4"/>
</dbReference>
<dbReference type="SMR" id="Q09EF7"/>
<dbReference type="FunCoup" id="Q09EF7">
    <property type="interactions" value="43"/>
</dbReference>
<dbReference type="STRING" id="6239.F35D11.11b.1"/>
<dbReference type="PaxDb" id="6239-F35D11.11b"/>
<dbReference type="EnsemblMetazoa" id="F35D11.11a.1">
    <molecule id="Q09EF7-2"/>
    <property type="protein sequence ID" value="F35D11.11a.1"/>
    <property type="gene ID" value="WBGene00018051"/>
</dbReference>
<dbReference type="EnsemblMetazoa" id="F35D11.11b.1">
    <molecule id="Q09EF7-1"/>
    <property type="protein sequence ID" value="F35D11.11b.1"/>
    <property type="gene ID" value="WBGene00018051"/>
</dbReference>
<dbReference type="EnsemblMetazoa" id="F35D11.11c.1">
    <molecule id="Q09EF7-3"/>
    <property type="protein sequence ID" value="F35D11.11c.1"/>
    <property type="gene ID" value="WBGene00018051"/>
</dbReference>
<dbReference type="EnsemblMetazoa" id="F35D11.11d.1">
    <molecule id="Q09EF7-4"/>
    <property type="protein sequence ID" value="F35D11.11d.1"/>
    <property type="gene ID" value="WBGene00018051"/>
</dbReference>
<dbReference type="GeneID" id="173801"/>
<dbReference type="KEGG" id="cel:CELE_F35D11.11"/>
<dbReference type="UCSC" id="F35D11.11b">
    <property type="organism name" value="c. elegans"/>
</dbReference>
<dbReference type="AGR" id="WB:WBGene00018051"/>
<dbReference type="CTD" id="173801"/>
<dbReference type="WormBase" id="F35D11.11a">
    <molecule id="Q09EF7-2"/>
    <property type="protein sequence ID" value="CE40410"/>
    <property type="gene ID" value="WBGene00018051"/>
    <property type="gene designation" value="che-10"/>
</dbReference>
<dbReference type="WormBase" id="F35D11.11b">
    <molecule id="Q09EF7-1"/>
    <property type="protein sequence ID" value="CE40411"/>
    <property type="gene ID" value="WBGene00018051"/>
    <property type="gene designation" value="che-10"/>
</dbReference>
<dbReference type="WormBase" id="F35D11.11c">
    <molecule id="Q09EF7-3"/>
    <property type="protein sequence ID" value="CE40412"/>
    <property type="gene ID" value="WBGene00018051"/>
    <property type="gene designation" value="che-10"/>
</dbReference>
<dbReference type="WormBase" id="F35D11.11d">
    <molecule id="Q09EF7-4"/>
    <property type="protein sequence ID" value="CE43383"/>
    <property type="gene ID" value="WBGene00018051"/>
    <property type="gene designation" value="che-10"/>
</dbReference>
<dbReference type="eggNOG" id="ENOG502RT7C">
    <property type="taxonomic scope" value="Eukaryota"/>
</dbReference>
<dbReference type="InParanoid" id="Q09EF7"/>
<dbReference type="OMA" id="RETMNER"/>
<dbReference type="OrthoDB" id="3549872at2759"/>
<dbReference type="PhylomeDB" id="Q09EF7"/>
<dbReference type="PRO" id="PR:Q09EF7"/>
<dbReference type="Proteomes" id="UP000001940">
    <property type="component" value="Chromosome II"/>
</dbReference>
<dbReference type="Bgee" id="WBGene00018051">
    <property type="expression patterns" value="Expressed in pharyngeal muscle cell (C elegans) and 3 other cell types or tissues"/>
</dbReference>
<dbReference type="GO" id="GO:0005813">
    <property type="term" value="C:centrosome"/>
    <property type="evidence" value="ECO:0000250"/>
    <property type="project" value="UniProtKB"/>
</dbReference>
<dbReference type="GO" id="GO:0036064">
    <property type="term" value="C:ciliary basal body"/>
    <property type="evidence" value="ECO:0000314"/>
    <property type="project" value="UniProtKB"/>
</dbReference>
<dbReference type="GO" id="GO:0035869">
    <property type="term" value="C:ciliary transition zone"/>
    <property type="evidence" value="ECO:0000314"/>
    <property type="project" value="WormBase"/>
</dbReference>
<dbReference type="GO" id="GO:0005737">
    <property type="term" value="C:cytoplasm"/>
    <property type="evidence" value="ECO:0007669"/>
    <property type="project" value="UniProtKB-KW"/>
</dbReference>
<dbReference type="GO" id="GO:0060271">
    <property type="term" value="P:cilium assembly"/>
    <property type="evidence" value="ECO:0000315"/>
    <property type="project" value="WormBase"/>
</dbReference>
<dbReference type="Gene3D" id="1.10.287.1490">
    <property type="match status" value="2"/>
</dbReference>
<dbReference type="InterPro" id="IPR055167">
    <property type="entry name" value="Rootletin-like_CC"/>
</dbReference>
<dbReference type="PANTHER" id="PTHR43941">
    <property type="entry name" value="STRUCTURAL MAINTENANCE OF CHROMOSOMES PROTEIN 2"/>
    <property type="match status" value="1"/>
</dbReference>
<dbReference type="Pfam" id="PF15035">
    <property type="entry name" value="Rootletin"/>
    <property type="match status" value="1"/>
</dbReference>
<accession>Q09EF7</accession>
<accession>G4SGS2</accession>
<accession>G4SGT1</accession>
<accession>G4SGT2</accession>
<accession>Q09EF5</accession>
<accession>Q09EF6</accession>
<accession>Q8MQ60</accession>
<sequence>MKSAASSEDVVRVTEDLSECRNRLDAGIEENRRNRQVIQDINDQLQRFRQRANAESIESFNLTPSPDVTLSSLAHPGLTHLHNQTNISMPSLTIDIPLNSNAMISSSRTPNYAINGLRNRHKSLVGHRYRSTSPIGDYGRHRSSPRVLAHYNLDGADIGVGEENLDELFAKLKEELFKNNTLEEVNEMLREENDAALAANEHLRVDATNLSRQLQQLQQQQHTESMRFRSENTRYRNQTETQHRKLISLWKEFTAVKRQLHELRTTTANDLDRQLTEFTRCATLMRKAIRHAEQKNLDQKEQMKREKDDVLDETLRQLNSVTENYMKSEEKANERQRDLKRKEDECRKLREQNDELSDILEQLSKMAHEMAGGRGRNETPMDVARKMRKLLTTKNGEIDESREAAKQAEKERDRAKKDLEKEEKRRKDDREAERKRSSVYSQREHDLKKLDDELRKASEKIRNLEEQRESQEKLTISVQNSLNEAHRQHKQFIEELMIRHREELKEREDSHEEALRSKDTEERSRFEKERSEREKIRRESDELRETQRSLKGDVAAMKTDLDDKTLRLDMLETERDELKKKLETEREQADQRDLEIAECRAKLDEMAEKEAELRKELAEFQAIITAMEGEGKLNQEQFLESKNELNTLTDQIESLNSEVENKNEEIRNLMATLQEKEVHIQNVRTSSHQLTATYEEANGEIDILKAELTRLHEQVNERTRQISEANEKYDDAARKNDALLEDVATWQEKYEQLKMELEEMNRRGQEKEREEADLRALLDDLRGNFDKLTNELKQKGVTVDSLNEEISSLKEQLNKSEKERKEELLRMEELEQKNEAEMKEEYEVKLQLAEKDRQGVENFGKECEARMNELTKIHEMLMEEHDQLKVDHLHTEEEVERLKEKMRKELEKLNEQNDGDRAEWSNERNRLESSKNEAVTELQERVQKLEDVVKEKEDKEIALRRDLEDSHEKSRDLDDKLRKMELTDEEKEEDRKKEQKTLNEERMKLMEQKEEAMLVATKHATTIDQQTRRISVLEGDVEKLTAGIAERESSINALESNTMELISKLETTEAELEKLKDELAVMLKQNSELKNGKEGLSEKWNEERKKIQDLADQLREANKVVHNMRMKNVNLEEKKNELDQNVTDLTNKVRQLEIQLMDKAAKNEVSGDLLRKMEHDAQSMLKQAQNEQFRLTDLEKVRKALQDENQRLVNDLATVKAAFEVKRETSKSAISDILDKYRSAEEKANKGELDNQRLRSDLATVTLKLERQELKAKDSDNRLRDSQKRFEEVQSKLANLQKSAVESLQNPMSSNSRQNRSIYVDIPRAASSIGLNENSDEVPLRSSPSVRFADSSQNMQRAVDSMDVSSSVGVTLRFLKERIEQLEADNADLSDALEKAKDELRQRNEKLADRQMVIERVERQLVHITEERNTIENRMTSQRQMYLTNEESSRSREHEIRSMKARISTLELHLREKESKLAHLRKEIEVLHGQLHDALESKEKATGLVGVQDSKHRDLEEQLDRANRERELAIGKQRRTLAENENLFRKLEQLEKEREQLMREITDERRLNERNRTSLEELRVSERTWKSAMTTAKKPAEEQERAVQEQRRWEESNHEMTNRNTALTKECDRLRVEMRDQLNRMNGINLRSVDFERKNEELSSKLIVMQNTVTAMKKFEEEWKRLEAEMRAELKILRKEKLMQTAEIEDLKRKSFRSDTEKKEIEGIRVRLEREISALKRHVDALEEEKGKTEKAVRETMNERRAIDKSLASMERENQQLYRNCAQLQAQIQNLERDAGNRSVTKLAKEHSLLEARIAALIEEKRQLQSMLDQKDANYSHKRKLLESQIQLLREQLEAERRKRTKGVVATGPTVSRRGVQHTSAFRHTIERHRSLSQSSERTILQERYLEYVYTGDRTPAIQMINTPPISPLSHSGSFNSDGREARIRRESDNGHLQH</sequence>
<proteinExistence type="evidence at transcript level"/>
<organism evidence="12">
    <name type="scientific">Caenorhabditis elegans</name>
    <dbReference type="NCBI Taxonomy" id="6239"/>
    <lineage>
        <taxon>Eukaryota</taxon>
        <taxon>Metazoa</taxon>
        <taxon>Ecdysozoa</taxon>
        <taxon>Nematoda</taxon>
        <taxon>Chromadorea</taxon>
        <taxon>Rhabditida</taxon>
        <taxon>Rhabditina</taxon>
        <taxon>Rhabditomorpha</taxon>
        <taxon>Rhabditoidea</taxon>
        <taxon>Rhabditidae</taxon>
        <taxon>Peloderinae</taxon>
        <taxon>Caenorhabditis</taxon>
    </lineage>
</organism>
<keyword id="KW-0025">Alternative splicing</keyword>
<keyword id="KW-0966">Cell projection</keyword>
<keyword id="KW-0969">Cilium</keyword>
<keyword id="KW-0970">Cilium biogenesis/degradation</keyword>
<keyword id="KW-0175">Coiled coil</keyword>
<keyword id="KW-0963">Cytoplasm</keyword>
<keyword id="KW-0206">Cytoskeleton</keyword>
<keyword id="KW-1185">Reference proteome</keyword>
<comment type="function">
    <text evidence="4 5 6">Major structural component of the ciliary rootlet, a cytoskeletal-like structure in ciliated cells which originates from the basal body at the proximal end of a cilium and extends proximally toward the cell nucleus (PubMed:24094853). Required for cilia integrity and function in sensory neurons (PubMed:17314406, PubMed:24094853, PubMed:2428682). Maintains cilia integrity, partly by modulating the assembly and transport of intraflagellar proteins along the ciliary axoneme (PubMed:24094853). Required for normal mating behavior and normal responses to environmental and chemical stimuli (PubMed:17314406, PubMed:24094853, PubMed:2428682).</text>
</comment>
<comment type="subcellular location">
    <subcellularLocation>
        <location evidence="5 7">Cytoplasm</location>
        <location evidence="5 7">Cytoskeleton</location>
        <location evidence="5 7">Cilium basal body</location>
    </subcellularLocation>
    <subcellularLocation>
        <location evidence="5">Cytoplasm</location>
        <location evidence="5">Cytoskeleton</location>
        <location evidence="5">Cilium axoneme</location>
    </subcellularLocation>
</comment>
<comment type="alternative products">
    <event type="alternative splicing"/>
    <isoform>
        <id>Q09EF7-1</id>
        <name evidence="14">b</name>
        <sequence type="displayed"/>
    </isoform>
    <isoform>
        <id>Q09EF7-2</id>
        <name evidence="13">a</name>
        <sequence type="described" ref="VSP_058714 VSP_058715"/>
    </isoform>
    <isoform>
        <id>Q09EF7-3</id>
        <name evidence="15">c</name>
        <sequence type="described" ref="VSP_058716 VSP_058717"/>
    </isoform>
    <isoform>
        <id>Q09EF7-4</id>
        <name evidence="16">d</name>
        <sequence type="described" ref="VSP_058713"/>
    </isoform>
</comment>
<comment type="tissue specificity">
    <text evidence="7">Expressed in head ciliated neurons.</text>
</comment>
<comment type="disruption phenotype">
    <text evidence="4 5 6">Ciliary degeneration which is partly due to irregular localization of ciliary components (PubMed:24094853). This likely leads to the impaired intraflagellar transport of proteins along the ciliary axoneme during the later stages of larval development (PubMed:24094853). Lack of or defects in amphid cilia including no transition zone and axoneme structures in amphid wing neurons, enlargened dendritic endings, variable cilia length of ADL neurons, absent or irregularly orientated cilia of the AFD neuron and absent striated rootlets which are normally associated with cilia basal bodies and positioned at the base of cilia in IL1, OLQ and BAG neurons (PubMed:17314406, PubMed:24094853, PubMed:2428682). Behavioral defects including no obvious mating behavior, impaired dauer formation, osmotic and CO(2+) avoidance and impaired chemotaxis (PubMed:24094853, PubMed:2428682).</text>
</comment>
<comment type="similarity">
    <text evidence="10">Belongs to the rootletin family.</text>
</comment>
<reference evidence="12" key="1">
    <citation type="journal article" date="1998" name="Science">
        <title>Genome sequence of the nematode C. elegans: a platform for investigating biology.</title>
        <authorList>
            <consortium name="The C. elegans sequencing consortium"/>
        </authorList>
    </citation>
    <scope>NUCLEOTIDE SEQUENCE [LARGE SCALE GENOMIC DNA]</scope>
    <source>
        <strain evidence="12">Bristol N2</strain>
    </source>
</reference>
<reference evidence="10" key="2">
    <citation type="journal article" date="1986" name="Dev. Biol.">
        <title>Mutant sensory cilia in the nematode Caenorhabditis elegans.</title>
        <authorList>
            <person name="Perkins L.A."/>
            <person name="Hedgecock E.M."/>
            <person name="Thomson J.N."/>
            <person name="Culotti J.G."/>
        </authorList>
    </citation>
    <scope>FUNCTION</scope>
    <scope>DISRUPTION PHENOTYPE</scope>
</reference>
<reference evidence="10" key="3">
    <citation type="journal article" date="2007" name="Mol. Biol. Cell">
        <title>Sensory ciliogenesis in Caenorhabditis elegans: assignment of IFT components into distinct modules based on transport and phenotypic profiles.</title>
        <authorList>
            <person name="Ou G."/>
            <person name="Koga M."/>
            <person name="Blacque O.E."/>
            <person name="Murayama T."/>
            <person name="Ohshima Y."/>
            <person name="Schafer J.C."/>
            <person name="Li C."/>
            <person name="Yoder B.K."/>
            <person name="Leroux M.R."/>
            <person name="Scholey J.M."/>
        </authorList>
    </citation>
    <scope>FUNCTION</scope>
    <scope>DISRUPTION PHENOTYPE</scope>
</reference>
<reference evidence="10" key="4">
    <citation type="journal article" date="2013" name="Curr. Biol.">
        <title>Striated rootlet and nonfilamentous forms of rootletin maintain ciliary function.</title>
        <authorList>
            <person name="Mohan S."/>
            <person name="Timbers T.A."/>
            <person name="Kennedy J."/>
            <person name="Blacque O.E."/>
            <person name="Leroux M.R."/>
        </authorList>
    </citation>
    <scope>FUNCTION</scope>
    <scope>SUBCELLULAR LOCATION</scope>
    <scope>DISRUPTION PHENOTYPE</scope>
</reference>
<reference evidence="10" key="5">
    <citation type="journal article" date="2016" name="Dev. Cell">
        <title>A Conserved role for girdin in basal body positioning and ciliogenesis.</title>
        <authorList>
            <person name="Nechipurenko I.V."/>
            <person name="Olivier-Mason A."/>
            <person name="Kazatskaya A."/>
            <person name="Kennedy J."/>
            <person name="McLachlan I.G."/>
            <person name="Heiman M.G."/>
            <person name="Blacque O.E."/>
            <person name="Sengupta P."/>
        </authorList>
    </citation>
    <scope>SUBCELLULAR LOCATION</scope>
    <scope>TISSUE SPECIFICITY</scope>
</reference>
<name>CROCC_CAEEL</name>
<protein>
    <recommendedName>
        <fullName evidence="1">Rootletin</fullName>
    </recommendedName>
    <alternativeName>
        <fullName evidence="11">Abnormal dye filling protein 14</fullName>
    </alternativeName>
    <alternativeName>
        <fullName evidence="14">Chemotaxis abnormal protein 10</fullName>
    </alternativeName>
</protein>